<protein>
    <recommendedName>
        <fullName evidence="1">Anthranilate phosphoribosyltransferase</fullName>
        <ecNumber evidence="1">2.4.2.18</ecNumber>
    </recommendedName>
</protein>
<keyword id="KW-0028">Amino-acid biosynthesis</keyword>
<keyword id="KW-0057">Aromatic amino acid biosynthesis</keyword>
<keyword id="KW-0328">Glycosyltransferase</keyword>
<keyword id="KW-0460">Magnesium</keyword>
<keyword id="KW-0479">Metal-binding</keyword>
<keyword id="KW-0808">Transferase</keyword>
<keyword id="KW-0822">Tryptophan biosynthesis</keyword>
<sequence>MKEIIEKLAKFENLSGVEMTDVIERIVTGRVTEAQIASLLLALKMKGETPEERTAIAQVMRGHAQHIPTEIHDAMDNCGTGGDKSFSFNISTTAAFVLAGGGIHMAKHGNRSISSKSGSADVLEALGINLDLKPAELGKVFDKTGIVFLFAKNMHPAMKYIMPARLELGIPTIMNLTGPLIHPMALETQLLGISRPELLESTAQVLKNMGRKRAIVVAGPEGLDEAGLNGTTKIALLENGEISLSSFTPEDLGMEDYAMEDIRGGNAQENAEILLSVLKNEASPFLETTVLNAGLGFYANGKIDSIKEGVALARQVIARGKALEKLRLLQEYQK</sequence>
<accession>C1CT54</accession>
<dbReference type="EC" id="2.4.2.18" evidence="1"/>
<dbReference type="EMBL" id="CP000921">
    <property type="protein sequence ID" value="ACO22440.1"/>
    <property type="molecule type" value="Genomic_DNA"/>
</dbReference>
<dbReference type="RefSeq" id="WP_000658682.1">
    <property type="nucleotide sequence ID" value="NC_012469.1"/>
</dbReference>
<dbReference type="SMR" id="C1CT54"/>
<dbReference type="KEGG" id="snt:SPT_1738"/>
<dbReference type="HOGENOM" id="CLU_034315_2_1_9"/>
<dbReference type="UniPathway" id="UPA00035">
    <property type="reaction ID" value="UER00041"/>
</dbReference>
<dbReference type="GO" id="GO:0005829">
    <property type="term" value="C:cytosol"/>
    <property type="evidence" value="ECO:0007669"/>
    <property type="project" value="TreeGrafter"/>
</dbReference>
<dbReference type="GO" id="GO:0004048">
    <property type="term" value="F:anthranilate phosphoribosyltransferase activity"/>
    <property type="evidence" value="ECO:0007669"/>
    <property type="project" value="UniProtKB-UniRule"/>
</dbReference>
<dbReference type="GO" id="GO:0000287">
    <property type="term" value="F:magnesium ion binding"/>
    <property type="evidence" value="ECO:0007669"/>
    <property type="project" value="UniProtKB-UniRule"/>
</dbReference>
<dbReference type="GO" id="GO:0000162">
    <property type="term" value="P:L-tryptophan biosynthetic process"/>
    <property type="evidence" value="ECO:0007669"/>
    <property type="project" value="UniProtKB-UniRule"/>
</dbReference>
<dbReference type="FunFam" id="3.40.1030.10:FF:000002">
    <property type="entry name" value="Anthranilate phosphoribosyltransferase"/>
    <property type="match status" value="1"/>
</dbReference>
<dbReference type="Gene3D" id="3.40.1030.10">
    <property type="entry name" value="Nucleoside phosphorylase/phosphoribosyltransferase catalytic domain"/>
    <property type="match status" value="1"/>
</dbReference>
<dbReference type="Gene3D" id="1.20.970.10">
    <property type="entry name" value="Transferase, Pyrimidine Nucleoside Phosphorylase, Chain C"/>
    <property type="match status" value="1"/>
</dbReference>
<dbReference type="HAMAP" id="MF_00211">
    <property type="entry name" value="TrpD"/>
    <property type="match status" value="1"/>
</dbReference>
<dbReference type="InterPro" id="IPR005940">
    <property type="entry name" value="Anthranilate_Pribosyl_Tfrase"/>
</dbReference>
<dbReference type="InterPro" id="IPR000312">
    <property type="entry name" value="Glycosyl_Trfase_fam3"/>
</dbReference>
<dbReference type="InterPro" id="IPR017459">
    <property type="entry name" value="Glycosyl_Trfase_fam3_N_dom"/>
</dbReference>
<dbReference type="InterPro" id="IPR036320">
    <property type="entry name" value="Glycosyl_Trfase_fam3_N_dom_sf"/>
</dbReference>
<dbReference type="InterPro" id="IPR035902">
    <property type="entry name" value="Nuc_phospho_transferase"/>
</dbReference>
<dbReference type="NCBIfam" id="TIGR01245">
    <property type="entry name" value="trpD"/>
    <property type="match status" value="1"/>
</dbReference>
<dbReference type="PANTHER" id="PTHR43285">
    <property type="entry name" value="ANTHRANILATE PHOSPHORIBOSYLTRANSFERASE"/>
    <property type="match status" value="1"/>
</dbReference>
<dbReference type="PANTHER" id="PTHR43285:SF2">
    <property type="entry name" value="ANTHRANILATE PHOSPHORIBOSYLTRANSFERASE"/>
    <property type="match status" value="1"/>
</dbReference>
<dbReference type="Pfam" id="PF02885">
    <property type="entry name" value="Glycos_trans_3N"/>
    <property type="match status" value="1"/>
</dbReference>
<dbReference type="Pfam" id="PF00591">
    <property type="entry name" value="Glycos_transf_3"/>
    <property type="match status" value="1"/>
</dbReference>
<dbReference type="SUPFAM" id="SSF52418">
    <property type="entry name" value="Nucleoside phosphorylase/phosphoribosyltransferase catalytic domain"/>
    <property type="match status" value="1"/>
</dbReference>
<dbReference type="SUPFAM" id="SSF47648">
    <property type="entry name" value="Nucleoside phosphorylase/phosphoribosyltransferase N-terminal domain"/>
    <property type="match status" value="1"/>
</dbReference>
<evidence type="ECO:0000255" key="1">
    <source>
        <dbReference type="HAMAP-Rule" id="MF_00211"/>
    </source>
</evidence>
<reference key="1">
    <citation type="journal article" date="2010" name="Genome Biol.">
        <title>Structure and dynamics of the pan-genome of Streptococcus pneumoniae and closely related species.</title>
        <authorList>
            <person name="Donati C."/>
            <person name="Hiller N.L."/>
            <person name="Tettelin H."/>
            <person name="Muzzi A."/>
            <person name="Croucher N.J."/>
            <person name="Angiuoli S.V."/>
            <person name="Oggioni M."/>
            <person name="Dunning Hotopp J.C."/>
            <person name="Hu F.Z."/>
            <person name="Riley D.R."/>
            <person name="Covacci A."/>
            <person name="Mitchell T.J."/>
            <person name="Bentley S.D."/>
            <person name="Kilian M."/>
            <person name="Ehrlich G.D."/>
            <person name="Rappuoli R."/>
            <person name="Moxon E.R."/>
            <person name="Masignani V."/>
        </authorList>
    </citation>
    <scope>NUCLEOTIDE SEQUENCE [LARGE SCALE GENOMIC DNA]</scope>
    <source>
        <strain>Taiwan19F-14</strain>
    </source>
</reference>
<organism>
    <name type="scientific">Streptococcus pneumoniae (strain Taiwan19F-14)</name>
    <dbReference type="NCBI Taxonomy" id="487213"/>
    <lineage>
        <taxon>Bacteria</taxon>
        <taxon>Bacillati</taxon>
        <taxon>Bacillota</taxon>
        <taxon>Bacilli</taxon>
        <taxon>Lactobacillales</taxon>
        <taxon>Streptococcaceae</taxon>
        <taxon>Streptococcus</taxon>
    </lineage>
</organism>
<comment type="function">
    <text evidence="1">Catalyzes the transfer of the phosphoribosyl group of 5-phosphorylribose-1-pyrophosphate (PRPP) to anthranilate to yield N-(5'-phosphoribosyl)-anthranilate (PRA).</text>
</comment>
<comment type="catalytic activity">
    <reaction evidence="1">
        <text>N-(5-phospho-beta-D-ribosyl)anthranilate + diphosphate = 5-phospho-alpha-D-ribose 1-diphosphate + anthranilate</text>
        <dbReference type="Rhea" id="RHEA:11768"/>
        <dbReference type="ChEBI" id="CHEBI:16567"/>
        <dbReference type="ChEBI" id="CHEBI:18277"/>
        <dbReference type="ChEBI" id="CHEBI:33019"/>
        <dbReference type="ChEBI" id="CHEBI:58017"/>
        <dbReference type="EC" id="2.4.2.18"/>
    </reaction>
</comment>
<comment type="cofactor">
    <cofactor evidence="1">
        <name>Mg(2+)</name>
        <dbReference type="ChEBI" id="CHEBI:18420"/>
    </cofactor>
    <text evidence="1">Binds 2 magnesium ions per monomer.</text>
</comment>
<comment type="pathway">
    <text evidence="1">Amino-acid biosynthesis; L-tryptophan biosynthesis; L-tryptophan from chorismate: step 2/5.</text>
</comment>
<comment type="subunit">
    <text evidence="1">Homodimer.</text>
</comment>
<comment type="similarity">
    <text evidence="1">Belongs to the anthranilate phosphoribosyltransferase family.</text>
</comment>
<proteinExistence type="inferred from homology"/>
<feature type="chain" id="PRO_1000198844" description="Anthranilate phosphoribosyltransferase">
    <location>
        <begin position="1"/>
        <end position="334"/>
    </location>
</feature>
<feature type="binding site" evidence="1">
    <location>
        <position position="79"/>
    </location>
    <ligand>
        <name>5-phospho-alpha-D-ribose 1-diphosphate</name>
        <dbReference type="ChEBI" id="CHEBI:58017"/>
    </ligand>
</feature>
<feature type="binding site" evidence="1">
    <location>
        <position position="79"/>
    </location>
    <ligand>
        <name>anthranilate</name>
        <dbReference type="ChEBI" id="CHEBI:16567"/>
        <label>1</label>
    </ligand>
</feature>
<feature type="binding site" evidence="1">
    <location>
        <begin position="82"/>
        <end position="83"/>
    </location>
    <ligand>
        <name>5-phospho-alpha-D-ribose 1-diphosphate</name>
        <dbReference type="ChEBI" id="CHEBI:58017"/>
    </ligand>
</feature>
<feature type="binding site" evidence="1">
    <location>
        <position position="87"/>
    </location>
    <ligand>
        <name>5-phospho-alpha-D-ribose 1-diphosphate</name>
        <dbReference type="ChEBI" id="CHEBI:58017"/>
    </ligand>
</feature>
<feature type="binding site" evidence="1">
    <location>
        <begin position="89"/>
        <end position="92"/>
    </location>
    <ligand>
        <name>5-phospho-alpha-D-ribose 1-diphosphate</name>
        <dbReference type="ChEBI" id="CHEBI:58017"/>
    </ligand>
</feature>
<feature type="binding site" evidence="1">
    <location>
        <position position="91"/>
    </location>
    <ligand>
        <name>Mg(2+)</name>
        <dbReference type="ChEBI" id="CHEBI:18420"/>
        <label>1</label>
    </ligand>
</feature>
<feature type="binding site" evidence="1">
    <location>
        <begin position="107"/>
        <end position="115"/>
    </location>
    <ligand>
        <name>5-phospho-alpha-D-ribose 1-diphosphate</name>
        <dbReference type="ChEBI" id="CHEBI:58017"/>
    </ligand>
</feature>
<feature type="binding site" evidence="1">
    <location>
        <position position="110"/>
    </location>
    <ligand>
        <name>anthranilate</name>
        <dbReference type="ChEBI" id="CHEBI:16567"/>
        <label>1</label>
    </ligand>
</feature>
<feature type="binding site" evidence="1">
    <location>
        <position position="119"/>
    </location>
    <ligand>
        <name>5-phospho-alpha-D-ribose 1-diphosphate</name>
        <dbReference type="ChEBI" id="CHEBI:58017"/>
    </ligand>
</feature>
<feature type="binding site" evidence="1">
    <location>
        <position position="165"/>
    </location>
    <ligand>
        <name>anthranilate</name>
        <dbReference type="ChEBI" id="CHEBI:16567"/>
        <label>2</label>
    </ligand>
</feature>
<feature type="binding site" evidence="1">
    <location>
        <position position="224"/>
    </location>
    <ligand>
        <name>Mg(2+)</name>
        <dbReference type="ChEBI" id="CHEBI:18420"/>
        <label>2</label>
    </ligand>
</feature>
<feature type="binding site" evidence="1">
    <location>
        <position position="225"/>
    </location>
    <ligand>
        <name>Mg(2+)</name>
        <dbReference type="ChEBI" id="CHEBI:18420"/>
        <label>1</label>
    </ligand>
</feature>
<feature type="binding site" evidence="1">
    <location>
        <position position="225"/>
    </location>
    <ligand>
        <name>Mg(2+)</name>
        <dbReference type="ChEBI" id="CHEBI:18420"/>
        <label>2</label>
    </ligand>
</feature>
<name>TRPD_STRZT</name>
<gene>
    <name evidence="1" type="primary">trpD</name>
    <name type="ordered locus">SPT_1738</name>
</gene>